<sequence>MSHNAIRPWRNIYRRKSRQIHVGPVPIGGDAPIAVQTMTNTLTTDIPGTIAQVQAAADAGADIVRVSVPDVDSSRALKEIVRESPVPIVADIHFHYKRGIEAAEAGAACLRINPGNIGDEKRVKEVIKAARDNNCSMRIGVNAGSLEKHLLDKYAEPCPEAMVESALDHIKILQDNDFHEFKISCKASDVFLSAAAYQALADATDAPLHLGITEAGGLMSGTIKSAIGLGNLLWMGIGDTIRVSLSADPVEEIKVGYDILKSLGLRHRGVNVISCPSCARQGFDVIKTVEALEQRLEHIKTPMSLSIIGCVVNGPGEALMTDVGFTGGGAGSGMVYLAGKQSHKMSNEQMIDHIVEQVEKRAAELDAIEAAEAAQDAAREPAE</sequence>
<protein>
    <recommendedName>
        <fullName evidence="1">4-hydroxy-3-methylbut-2-en-1-yl diphosphate synthase (flavodoxin)</fullName>
        <ecNumber evidence="1">1.17.7.3</ecNumber>
    </recommendedName>
    <alternativeName>
        <fullName evidence="1">1-hydroxy-2-methyl-2-(E)-butenyl 4-diphosphate synthase</fullName>
    </alternativeName>
</protein>
<reference key="1">
    <citation type="journal article" date="2010" name="ISME J.">
        <title>The complete genome sequence of the algal symbiont Dinoroseobacter shibae: a hitchhiker's guide to life in the sea.</title>
        <authorList>
            <person name="Wagner-Dobler I."/>
            <person name="Ballhausen B."/>
            <person name="Berger M."/>
            <person name="Brinkhoff T."/>
            <person name="Buchholz I."/>
            <person name="Bunk B."/>
            <person name="Cypionka H."/>
            <person name="Daniel R."/>
            <person name="Drepper T."/>
            <person name="Gerdts G."/>
            <person name="Hahnke S."/>
            <person name="Han C."/>
            <person name="Jahn D."/>
            <person name="Kalhoefer D."/>
            <person name="Kiss H."/>
            <person name="Klenk H.P."/>
            <person name="Kyrpides N."/>
            <person name="Liebl W."/>
            <person name="Liesegang H."/>
            <person name="Meincke L."/>
            <person name="Pati A."/>
            <person name="Petersen J."/>
            <person name="Piekarski T."/>
            <person name="Pommerenke C."/>
            <person name="Pradella S."/>
            <person name="Pukall R."/>
            <person name="Rabus R."/>
            <person name="Stackebrandt E."/>
            <person name="Thole S."/>
            <person name="Thompson L."/>
            <person name="Tielen P."/>
            <person name="Tomasch J."/>
            <person name="von Jan M."/>
            <person name="Wanphrut N."/>
            <person name="Wichels A."/>
            <person name="Zech H."/>
            <person name="Simon M."/>
        </authorList>
    </citation>
    <scope>NUCLEOTIDE SEQUENCE [LARGE SCALE GENOMIC DNA]</scope>
    <source>
        <strain>DSM 16493 / NCIMB 14021 / DFL 12</strain>
    </source>
</reference>
<dbReference type="EC" id="1.17.7.3" evidence="1"/>
<dbReference type="EMBL" id="CP000830">
    <property type="protein sequence ID" value="ABV92926.1"/>
    <property type="molecule type" value="Genomic_DNA"/>
</dbReference>
<dbReference type="RefSeq" id="WP_012177856.1">
    <property type="nucleotide sequence ID" value="NC_009952.1"/>
</dbReference>
<dbReference type="SMR" id="A8LI72"/>
<dbReference type="STRING" id="398580.Dshi_1184"/>
<dbReference type="KEGG" id="dsh:Dshi_1184"/>
<dbReference type="eggNOG" id="COG0821">
    <property type="taxonomic scope" value="Bacteria"/>
</dbReference>
<dbReference type="HOGENOM" id="CLU_042258_0_0_5"/>
<dbReference type="OrthoDB" id="9803214at2"/>
<dbReference type="UniPathway" id="UPA00056">
    <property type="reaction ID" value="UER00096"/>
</dbReference>
<dbReference type="Proteomes" id="UP000006833">
    <property type="component" value="Chromosome"/>
</dbReference>
<dbReference type="GO" id="GO:0051539">
    <property type="term" value="F:4 iron, 4 sulfur cluster binding"/>
    <property type="evidence" value="ECO:0007669"/>
    <property type="project" value="UniProtKB-UniRule"/>
</dbReference>
<dbReference type="GO" id="GO:0046429">
    <property type="term" value="F:4-hydroxy-3-methylbut-2-en-1-yl diphosphate synthase activity (ferredoxin)"/>
    <property type="evidence" value="ECO:0007669"/>
    <property type="project" value="UniProtKB-UniRule"/>
</dbReference>
<dbReference type="GO" id="GO:0141197">
    <property type="term" value="F:4-hydroxy-3-methylbut-2-enyl-diphosphate synthase activity (flavodoxin)"/>
    <property type="evidence" value="ECO:0007669"/>
    <property type="project" value="UniProtKB-EC"/>
</dbReference>
<dbReference type="GO" id="GO:0005506">
    <property type="term" value="F:iron ion binding"/>
    <property type="evidence" value="ECO:0007669"/>
    <property type="project" value="InterPro"/>
</dbReference>
<dbReference type="GO" id="GO:0019288">
    <property type="term" value="P:isopentenyl diphosphate biosynthetic process, methylerythritol 4-phosphate pathway"/>
    <property type="evidence" value="ECO:0007669"/>
    <property type="project" value="UniProtKB-UniRule"/>
</dbReference>
<dbReference type="GO" id="GO:0016114">
    <property type="term" value="P:terpenoid biosynthetic process"/>
    <property type="evidence" value="ECO:0007669"/>
    <property type="project" value="InterPro"/>
</dbReference>
<dbReference type="FunFam" id="3.20.20.20:FF:000001">
    <property type="entry name" value="4-hydroxy-3-methylbut-2-en-1-yl diphosphate synthase (flavodoxin)"/>
    <property type="match status" value="1"/>
</dbReference>
<dbReference type="Gene3D" id="3.20.20.20">
    <property type="entry name" value="Dihydropteroate synthase-like"/>
    <property type="match status" value="1"/>
</dbReference>
<dbReference type="Gene3D" id="3.30.413.10">
    <property type="entry name" value="Sulfite Reductase Hemoprotein, domain 1"/>
    <property type="match status" value="1"/>
</dbReference>
<dbReference type="HAMAP" id="MF_00159">
    <property type="entry name" value="IspG"/>
    <property type="match status" value="1"/>
</dbReference>
<dbReference type="InterPro" id="IPR011005">
    <property type="entry name" value="Dihydropteroate_synth-like_sf"/>
</dbReference>
<dbReference type="InterPro" id="IPR016425">
    <property type="entry name" value="IspG_bac"/>
</dbReference>
<dbReference type="InterPro" id="IPR004588">
    <property type="entry name" value="IspG_bac-typ"/>
</dbReference>
<dbReference type="InterPro" id="IPR045854">
    <property type="entry name" value="NO2/SO3_Rdtase_4Fe4S_sf"/>
</dbReference>
<dbReference type="NCBIfam" id="TIGR00612">
    <property type="entry name" value="ispG_gcpE"/>
    <property type="match status" value="1"/>
</dbReference>
<dbReference type="NCBIfam" id="NF001540">
    <property type="entry name" value="PRK00366.1"/>
    <property type="match status" value="1"/>
</dbReference>
<dbReference type="PANTHER" id="PTHR30454">
    <property type="entry name" value="4-HYDROXY-3-METHYLBUT-2-EN-1-YL DIPHOSPHATE SYNTHASE"/>
    <property type="match status" value="1"/>
</dbReference>
<dbReference type="PANTHER" id="PTHR30454:SF0">
    <property type="entry name" value="4-HYDROXY-3-METHYLBUT-2-EN-1-YL DIPHOSPHATE SYNTHASE (FERREDOXIN), CHLOROPLASTIC"/>
    <property type="match status" value="1"/>
</dbReference>
<dbReference type="Pfam" id="PF04551">
    <property type="entry name" value="GcpE"/>
    <property type="match status" value="1"/>
</dbReference>
<dbReference type="PIRSF" id="PIRSF004640">
    <property type="entry name" value="IspG"/>
    <property type="match status" value="1"/>
</dbReference>
<dbReference type="SUPFAM" id="SSF51717">
    <property type="entry name" value="Dihydropteroate synthetase-like"/>
    <property type="match status" value="1"/>
</dbReference>
<dbReference type="SUPFAM" id="SSF56014">
    <property type="entry name" value="Nitrite and sulphite reductase 4Fe-4S domain-like"/>
    <property type="match status" value="1"/>
</dbReference>
<gene>
    <name evidence="1" type="primary">ispG</name>
    <name type="ordered locus">Dshi_1184</name>
</gene>
<evidence type="ECO:0000255" key="1">
    <source>
        <dbReference type="HAMAP-Rule" id="MF_00159"/>
    </source>
</evidence>
<feature type="chain" id="PRO_1000076883" description="4-hydroxy-3-methylbut-2-en-1-yl diphosphate synthase (flavodoxin)">
    <location>
        <begin position="1"/>
        <end position="383"/>
    </location>
</feature>
<feature type="binding site" evidence="1">
    <location>
        <position position="275"/>
    </location>
    <ligand>
        <name>[4Fe-4S] cluster</name>
        <dbReference type="ChEBI" id="CHEBI:49883"/>
    </ligand>
</feature>
<feature type="binding site" evidence="1">
    <location>
        <position position="278"/>
    </location>
    <ligand>
        <name>[4Fe-4S] cluster</name>
        <dbReference type="ChEBI" id="CHEBI:49883"/>
    </ligand>
</feature>
<feature type="binding site" evidence="1">
    <location>
        <position position="310"/>
    </location>
    <ligand>
        <name>[4Fe-4S] cluster</name>
        <dbReference type="ChEBI" id="CHEBI:49883"/>
    </ligand>
</feature>
<feature type="binding site" evidence="1">
    <location>
        <position position="317"/>
    </location>
    <ligand>
        <name>[4Fe-4S] cluster</name>
        <dbReference type="ChEBI" id="CHEBI:49883"/>
    </ligand>
</feature>
<proteinExistence type="inferred from homology"/>
<name>ISPG_DINSH</name>
<accession>A8LI72</accession>
<organism>
    <name type="scientific">Dinoroseobacter shibae (strain DSM 16493 / NCIMB 14021 / DFL 12)</name>
    <dbReference type="NCBI Taxonomy" id="398580"/>
    <lineage>
        <taxon>Bacteria</taxon>
        <taxon>Pseudomonadati</taxon>
        <taxon>Pseudomonadota</taxon>
        <taxon>Alphaproteobacteria</taxon>
        <taxon>Rhodobacterales</taxon>
        <taxon>Roseobacteraceae</taxon>
        <taxon>Dinoroseobacter</taxon>
    </lineage>
</organism>
<keyword id="KW-0004">4Fe-4S</keyword>
<keyword id="KW-0408">Iron</keyword>
<keyword id="KW-0411">Iron-sulfur</keyword>
<keyword id="KW-0414">Isoprene biosynthesis</keyword>
<keyword id="KW-0479">Metal-binding</keyword>
<keyword id="KW-0560">Oxidoreductase</keyword>
<keyword id="KW-1185">Reference proteome</keyword>
<comment type="function">
    <text evidence="1">Converts 2C-methyl-D-erythritol 2,4-cyclodiphosphate (ME-2,4cPP) into 1-hydroxy-2-methyl-2-(E)-butenyl 4-diphosphate.</text>
</comment>
<comment type="catalytic activity">
    <reaction evidence="1">
        <text>(2E)-4-hydroxy-3-methylbut-2-enyl diphosphate + oxidized [flavodoxin] + H2O + 2 H(+) = 2-C-methyl-D-erythritol 2,4-cyclic diphosphate + reduced [flavodoxin]</text>
        <dbReference type="Rhea" id="RHEA:43604"/>
        <dbReference type="Rhea" id="RHEA-COMP:10622"/>
        <dbReference type="Rhea" id="RHEA-COMP:10623"/>
        <dbReference type="ChEBI" id="CHEBI:15377"/>
        <dbReference type="ChEBI" id="CHEBI:15378"/>
        <dbReference type="ChEBI" id="CHEBI:57618"/>
        <dbReference type="ChEBI" id="CHEBI:58210"/>
        <dbReference type="ChEBI" id="CHEBI:58483"/>
        <dbReference type="ChEBI" id="CHEBI:128753"/>
        <dbReference type="EC" id="1.17.7.3"/>
    </reaction>
</comment>
<comment type="cofactor">
    <cofactor evidence="1">
        <name>[4Fe-4S] cluster</name>
        <dbReference type="ChEBI" id="CHEBI:49883"/>
    </cofactor>
    <text evidence="1">Binds 1 [4Fe-4S] cluster.</text>
</comment>
<comment type="pathway">
    <text evidence="1">Isoprenoid biosynthesis; isopentenyl diphosphate biosynthesis via DXP pathway; isopentenyl diphosphate from 1-deoxy-D-xylulose 5-phosphate: step 5/6.</text>
</comment>
<comment type="similarity">
    <text evidence="1">Belongs to the IspG family.</text>
</comment>